<evidence type="ECO:0000250" key="1">
    <source>
        <dbReference type="UniProtKB" id="P58443"/>
    </source>
</evidence>
<evidence type="ECO:0000250" key="2">
    <source>
        <dbReference type="UniProtKB" id="P82230"/>
    </source>
</evidence>
<evidence type="ECO:0000255" key="3">
    <source>
        <dbReference type="PROSITE-ProRule" id="PRU00395"/>
    </source>
</evidence>
<evidence type="ECO:0000269" key="4">
    <source>
    </source>
</evidence>
<evidence type="ECO:0000305" key="5"/>
<evidence type="ECO:0000312" key="6">
    <source>
        <dbReference type="EMBL" id="ABW08090.1"/>
    </source>
</evidence>
<name>CYVE_VIOBI</name>
<proteinExistence type="evidence at protein level"/>
<keyword id="KW-0903">Direct protein sequencing</keyword>
<keyword id="KW-1015">Disulfide bond</keyword>
<keyword id="KW-0960">Knottin</keyword>
<keyword id="KW-0611">Plant defense</keyword>
<keyword id="KW-0732">Signal</keyword>
<protein>
    <recommendedName>
        <fullName>Cyclotide vibi-E</fullName>
    </recommendedName>
    <alternativeName>
        <fullName>Vbc1</fullName>
    </alternativeName>
</protein>
<comment type="function">
    <text evidence="3 4 5">Probably participates in a plant defense mechanism. Has cytotoxic activity, active against a human lymphoma cell line with an IC(50) of 3.2 uM.</text>
</comment>
<comment type="domain">
    <text evidence="2">The presence of a 'disulfide through disulfide knot' structurally defines this protein as a knottin.</text>
</comment>
<comment type="PTM">
    <text evidence="3 4">This is a cyclic peptide.</text>
</comment>
<comment type="mass spectrometry" mass="3081.0" method="Electrospray" evidence="4"/>
<comment type="similarity">
    <text evidence="3">Belongs to the cyclotide family. Bracelet subfamily.</text>
</comment>
<sequence length="105" mass="11068">AAFALPALASSFEKDVISFRAIQAVLEKRGLSKLEDDPVLSALAHTKTIISNPVIEEALLNGANLKAGNGIPCAESCVWIPCTVTALIGCGCSNKVCYNSLQTKY</sequence>
<organism>
    <name type="scientific">Viola biflora</name>
    <name type="common">Yellow wood violet</name>
    <dbReference type="NCBI Taxonomy" id="214529"/>
    <lineage>
        <taxon>Eukaryota</taxon>
        <taxon>Viridiplantae</taxon>
        <taxon>Streptophyta</taxon>
        <taxon>Embryophyta</taxon>
        <taxon>Tracheophyta</taxon>
        <taxon>Spermatophyta</taxon>
        <taxon>Magnoliopsida</taxon>
        <taxon>eudicotyledons</taxon>
        <taxon>Gunneridae</taxon>
        <taxon>Pentapetalae</taxon>
        <taxon>rosids</taxon>
        <taxon>fabids</taxon>
        <taxon>Malpighiales</taxon>
        <taxon>Violaceae</taxon>
        <taxon>Viola</taxon>
        <taxon>Viola subgen. Viola</taxon>
        <taxon>Viola sect. Chamaemelanium</taxon>
    </lineage>
</organism>
<reference evidence="5 6" key="1">
    <citation type="journal article" date="2008" name="Phytochemistry">
        <title>The alpine violet, Viola biflora, is a rich source of cyclotides with potent cytotoxicity.</title>
        <authorList>
            <person name="Herrmann A."/>
            <person name="Burman R."/>
            <person name="Mylne J.S."/>
            <person name="Karlsson G."/>
            <person name="Gullbo J."/>
            <person name="Craik D.J."/>
            <person name="Clark R.J."/>
            <person name="Goeransson U."/>
        </authorList>
    </citation>
    <scope>NUCLEOTIDE SEQUENCE [MRNA]</scope>
    <scope>PROTEIN SEQUENCE OF 70-99</scope>
    <scope>FUNCTION</scope>
    <scope>MASS SPECTROMETRY</scope>
    <source>
        <tissue evidence="4">Leaf</tissue>
    </source>
</reference>
<feature type="signal peptide" evidence="1">
    <location>
        <begin position="1" status="less than"/>
        <end position="9"/>
    </location>
</feature>
<feature type="propeptide" id="PRO_0000341425" evidence="4">
    <location>
        <begin position="10"/>
        <end position="69"/>
    </location>
</feature>
<feature type="peptide" id="PRO_0000341426" description="Cyclotide vibi-E">
    <location>
        <begin position="70"/>
        <end position="99"/>
    </location>
</feature>
<feature type="propeptide" id="PRO_0000341427" evidence="4">
    <location>
        <begin position="100"/>
        <end position="105"/>
    </location>
</feature>
<feature type="disulfide bond" evidence="2 3">
    <location>
        <begin position="73"/>
        <end position="90"/>
    </location>
</feature>
<feature type="disulfide bond" evidence="2 3">
    <location>
        <begin position="77"/>
        <end position="92"/>
    </location>
</feature>
<feature type="disulfide bond" evidence="2 3">
    <location>
        <begin position="82"/>
        <end position="97"/>
    </location>
</feature>
<feature type="cross-link" description="Cyclopeptide (Gly-Asn)" evidence="4">
    <location>
        <begin position="70"/>
        <end position="99"/>
    </location>
</feature>
<feature type="non-terminal residue" evidence="6">
    <location>
        <position position="1"/>
    </location>
</feature>
<dbReference type="EMBL" id="EU046618">
    <property type="protein sequence ID" value="ABW08090.1"/>
    <property type="molecule type" value="mRNA"/>
</dbReference>
<dbReference type="SMR" id="B1NRQ8"/>
<dbReference type="GO" id="GO:0006952">
    <property type="term" value="P:defense response"/>
    <property type="evidence" value="ECO:0007669"/>
    <property type="project" value="UniProtKB-KW"/>
</dbReference>
<dbReference type="InterPro" id="IPR005535">
    <property type="entry name" value="Cyclotide"/>
</dbReference>
<dbReference type="InterPro" id="IPR012323">
    <property type="entry name" value="Cyclotide_bracelet_CS"/>
</dbReference>
<dbReference type="InterPro" id="IPR036146">
    <property type="entry name" value="Cyclotide_sf"/>
</dbReference>
<dbReference type="Pfam" id="PF03784">
    <property type="entry name" value="Cyclotide"/>
    <property type="match status" value="1"/>
</dbReference>
<dbReference type="SUPFAM" id="SSF57038">
    <property type="entry name" value="Cyclotides"/>
    <property type="match status" value="1"/>
</dbReference>
<dbReference type="PROSITE" id="PS51052">
    <property type="entry name" value="CYCLOTIDE"/>
    <property type="match status" value="1"/>
</dbReference>
<dbReference type="PROSITE" id="PS60008">
    <property type="entry name" value="CYCLOTIDE_BRACELET"/>
    <property type="match status" value="1"/>
</dbReference>
<accession>B1NRQ8</accession>
<accession>P85243</accession>